<feature type="chain" id="PRO_0000314215" description="UPF0262 protein Rru_A2770">
    <location>
        <begin position="1"/>
        <end position="161"/>
    </location>
</feature>
<reference key="1">
    <citation type="journal article" date="2011" name="Stand. Genomic Sci.">
        <title>Complete genome sequence of Rhodospirillum rubrum type strain (S1).</title>
        <authorList>
            <person name="Munk A.C."/>
            <person name="Copeland A."/>
            <person name="Lucas S."/>
            <person name="Lapidus A."/>
            <person name="Del Rio T.G."/>
            <person name="Barry K."/>
            <person name="Detter J.C."/>
            <person name="Hammon N."/>
            <person name="Israni S."/>
            <person name="Pitluck S."/>
            <person name="Brettin T."/>
            <person name="Bruce D."/>
            <person name="Han C."/>
            <person name="Tapia R."/>
            <person name="Gilna P."/>
            <person name="Schmutz J."/>
            <person name="Larimer F."/>
            <person name="Land M."/>
            <person name="Kyrpides N.C."/>
            <person name="Mavromatis K."/>
            <person name="Richardson P."/>
            <person name="Rohde M."/>
            <person name="Goeker M."/>
            <person name="Klenk H.P."/>
            <person name="Zhang Y."/>
            <person name="Roberts G.P."/>
            <person name="Reslewic S."/>
            <person name="Schwartz D.C."/>
        </authorList>
    </citation>
    <scope>NUCLEOTIDE SEQUENCE [LARGE SCALE GENOMIC DNA]</scope>
    <source>
        <strain>ATCC 11170 / ATH 1.1.1 / DSM 467 / LMG 4362 / NCIMB 8255 / S1</strain>
    </source>
</reference>
<sequence length="161" mass="18546">MEEGELKDTDHLIDIQLDEVTFVRRRPEVEHERAVAIFDLLEDNHFGIKGFQGPFRLVLSLAENRLLFDIRDGEDKPLRKVILSLRPFRMIVKDYFMICESYFSAIRSMTPAQIEAIDMGRRGLHNEGGAVLKERLAGKVVVDHDTARRLFTLICVLHARG</sequence>
<proteinExistence type="inferred from homology"/>
<organism>
    <name type="scientific">Rhodospirillum rubrum (strain ATCC 11170 / ATH 1.1.1 / DSM 467 / LMG 4362 / NCIMB 8255 / S1)</name>
    <dbReference type="NCBI Taxonomy" id="269796"/>
    <lineage>
        <taxon>Bacteria</taxon>
        <taxon>Pseudomonadati</taxon>
        <taxon>Pseudomonadota</taxon>
        <taxon>Alphaproteobacteria</taxon>
        <taxon>Rhodospirillales</taxon>
        <taxon>Rhodospirillaceae</taxon>
        <taxon>Rhodospirillum</taxon>
    </lineage>
</organism>
<comment type="similarity">
    <text evidence="1">Belongs to the UPF0262 family.</text>
</comment>
<keyword id="KW-1185">Reference proteome</keyword>
<protein>
    <recommendedName>
        <fullName evidence="1">UPF0262 protein Rru_A2770</fullName>
    </recommendedName>
</protein>
<evidence type="ECO:0000255" key="1">
    <source>
        <dbReference type="HAMAP-Rule" id="MF_00678"/>
    </source>
</evidence>
<name>Y2770_RHORT</name>
<accession>Q2RQM8</accession>
<dbReference type="EMBL" id="CP000230">
    <property type="protein sequence ID" value="ABC23567.1"/>
    <property type="molecule type" value="Genomic_DNA"/>
</dbReference>
<dbReference type="RefSeq" id="WP_011390580.1">
    <property type="nucleotide sequence ID" value="NC_007643.1"/>
</dbReference>
<dbReference type="RefSeq" id="YP_427854.1">
    <property type="nucleotide sequence ID" value="NC_007643.1"/>
</dbReference>
<dbReference type="STRING" id="269796.Rru_A2770"/>
<dbReference type="EnsemblBacteria" id="ABC23567">
    <property type="protein sequence ID" value="ABC23567"/>
    <property type="gene ID" value="Rru_A2770"/>
</dbReference>
<dbReference type="KEGG" id="rru:Rru_A2770"/>
<dbReference type="PATRIC" id="fig|269796.9.peg.2876"/>
<dbReference type="eggNOG" id="COG5328">
    <property type="taxonomic scope" value="Bacteria"/>
</dbReference>
<dbReference type="HOGENOM" id="CLU_112904_0_0_5"/>
<dbReference type="PhylomeDB" id="Q2RQM8"/>
<dbReference type="Proteomes" id="UP000001929">
    <property type="component" value="Chromosome"/>
</dbReference>
<dbReference type="HAMAP" id="MF_00678">
    <property type="entry name" value="UPF0262"/>
    <property type="match status" value="1"/>
</dbReference>
<dbReference type="InterPro" id="IPR008321">
    <property type="entry name" value="UCP032146"/>
</dbReference>
<dbReference type="NCBIfam" id="NF002769">
    <property type="entry name" value="PRK02853.1"/>
    <property type="match status" value="1"/>
</dbReference>
<dbReference type="Pfam" id="PF06793">
    <property type="entry name" value="UPF0262"/>
    <property type="match status" value="1"/>
</dbReference>
<dbReference type="PIRSF" id="PIRSF032146">
    <property type="entry name" value="UCP032146"/>
    <property type="match status" value="1"/>
</dbReference>
<gene>
    <name type="ordered locus">Rru_A2770</name>
</gene>